<name>GUAA_BACAH</name>
<organism>
    <name type="scientific">Bacillus thuringiensis (strain Al Hakam)</name>
    <dbReference type="NCBI Taxonomy" id="412694"/>
    <lineage>
        <taxon>Bacteria</taxon>
        <taxon>Bacillati</taxon>
        <taxon>Bacillota</taxon>
        <taxon>Bacilli</taxon>
        <taxon>Bacillales</taxon>
        <taxon>Bacillaceae</taxon>
        <taxon>Bacillus</taxon>
        <taxon>Bacillus cereus group</taxon>
    </lineage>
</organism>
<comment type="function">
    <text evidence="1">Catalyzes the synthesis of GMP from XMP.</text>
</comment>
<comment type="catalytic activity">
    <reaction evidence="1">
        <text>XMP + L-glutamine + ATP + H2O = GMP + L-glutamate + AMP + diphosphate + 2 H(+)</text>
        <dbReference type="Rhea" id="RHEA:11680"/>
        <dbReference type="ChEBI" id="CHEBI:15377"/>
        <dbReference type="ChEBI" id="CHEBI:15378"/>
        <dbReference type="ChEBI" id="CHEBI:29985"/>
        <dbReference type="ChEBI" id="CHEBI:30616"/>
        <dbReference type="ChEBI" id="CHEBI:33019"/>
        <dbReference type="ChEBI" id="CHEBI:57464"/>
        <dbReference type="ChEBI" id="CHEBI:58115"/>
        <dbReference type="ChEBI" id="CHEBI:58359"/>
        <dbReference type="ChEBI" id="CHEBI:456215"/>
        <dbReference type="EC" id="6.3.5.2"/>
    </reaction>
</comment>
<comment type="pathway">
    <text evidence="1">Purine metabolism; GMP biosynthesis; GMP from XMP (L-Gln route): step 1/1.</text>
</comment>
<comment type="subunit">
    <text evidence="1">Homodimer.</text>
</comment>
<protein>
    <recommendedName>
        <fullName evidence="1">GMP synthase [glutamine-hydrolyzing]</fullName>
        <ecNumber evidence="1">6.3.5.2</ecNumber>
    </recommendedName>
    <alternativeName>
        <fullName evidence="1">GMP synthetase</fullName>
    </alternativeName>
    <alternativeName>
        <fullName evidence="1">Glutamine amidotransferase</fullName>
    </alternativeName>
</protein>
<evidence type="ECO:0000255" key="1">
    <source>
        <dbReference type="HAMAP-Rule" id="MF_00344"/>
    </source>
</evidence>
<dbReference type="EC" id="6.3.5.2" evidence="1"/>
<dbReference type="EMBL" id="CP000485">
    <property type="protein sequence ID" value="ABK83660.1"/>
    <property type="molecule type" value="Genomic_DNA"/>
</dbReference>
<dbReference type="SMR" id="A0R8W7"/>
<dbReference type="MEROPS" id="C26.957"/>
<dbReference type="KEGG" id="btl:BALH_0254"/>
<dbReference type="HOGENOM" id="CLU_014340_0_5_9"/>
<dbReference type="UniPathway" id="UPA00189">
    <property type="reaction ID" value="UER00296"/>
</dbReference>
<dbReference type="GO" id="GO:0005829">
    <property type="term" value="C:cytosol"/>
    <property type="evidence" value="ECO:0007669"/>
    <property type="project" value="TreeGrafter"/>
</dbReference>
<dbReference type="GO" id="GO:0005524">
    <property type="term" value="F:ATP binding"/>
    <property type="evidence" value="ECO:0007669"/>
    <property type="project" value="UniProtKB-UniRule"/>
</dbReference>
<dbReference type="GO" id="GO:0003921">
    <property type="term" value="F:GMP synthase activity"/>
    <property type="evidence" value="ECO:0007669"/>
    <property type="project" value="InterPro"/>
</dbReference>
<dbReference type="CDD" id="cd01742">
    <property type="entry name" value="GATase1_GMP_Synthase"/>
    <property type="match status" value="1"/>
</dbReference>
<dbReference type="CDD" id="cd01997">
    <property type="entry name" value="GMP_synthase_C"/>
    <property type="match status" value="1"/>
</dbReference>
<dbReference type="FunFam" id="3.30.300.10:FF:000002">
    <property type="entry name" value="GMP synthase [glutamine-hydrolyzing]"/>
    <property type="match status" value="1"/>
</dbReference>
<dbReference type="FunFam" id="3.40.50.620:FF:000001">
    <property type="entry name" value="GMP synthase [glutamine-hydrolyzing]"/>
    <property type="match status" value="1"/>
</dbReference>
<dbReference type="FunFam" id="3.40.50.880:FF:000001">
    <property type="entry name" value="GMP synthase [glutamine-hydrolyzing]"/>
    <property type="match status" value="1"/>
</dbReference>
<dbReference type="Gene3D" id="3.30.300.10">
    <property type="match status" value="1"/>
</dbReference>
<dbReference type="Gene3D" id="3.40.50.880">
    <property type="match status" value="1"/>
</dbReference>
<dbReference type="Gene3D" id="3.40.50.620">
    <property type="entry name" value="HUPs"/>
    <property type="match status" value="1"/>
</dbReference>
<dbReference type="HAMAP" id="MF_00344">
    <property type="entry name" value="GMP_synthase"/>
    <property type="match status" value="1"/>
</dbReference>
<dbReference type="InterPro" id="IPR029062">
    <property type="entry name" value="Class_I_gatase-like"/>
</dbReference>
<dbReference type="InterPro" id="IPR017926">
    <property type="entry name" value="GATASE"/>
</dbReference>
<dbReference type="InterPro" id="IPR001674">
    <property type="entry name" value="GMP_synth_C"/>
</dbReference>
<dbReference type="InterPro" id="IPR004739">
    <property type="entry name" value="GMP_synth_GATase"/>
</dbReference>
<dbReference type="InterPro" id="IPR022955">
    <property type="entry name" value="GMP_synthase"/>
</dbReference>
<dbReference type="InterPro" id="IPR025777">
    <property type="entry name" value="GMPS_ATP_PPase_dom"/>
</dbReference>
<dbReference type="InterPro" id="IPR022310">
    <property type="entry name" value="NAD/GMP_synthase"/>
</dbReference>
<dbReference type="InterPro" id="IPR014729">
    <property type="entry name" value="Rossmann-like_a/b/a_fold"/>
</dbReference>
<dbReference type="NCBIfam" id="TIGR00884">
    <property type="entry name" value="guaA_Cterm"/>
    <property type="match status" value="1"/>
</dbReference>
<dbReference type="NCBIfam" id="TIGR00888">
    <property type="entry name" value="guaA_Nterm"/>
    <property type="match status" value="1"/>
</dbReference>
<dbReference type="NCBIfam" id="NF000848">
    <property type="entry name" value="PRK00074.1"/>
    <property type="match status" value="1"/>
</dbReference>
<dbReference type="PANTHER" id="PTHR11922:SF2">
    <property type="entry name" value="GMP SYNTHASE [GLUTAMINE-HYDROLYZING]"/>
    <property type="match status" value="1"/>
</dbReference>
<dbReference type="PANTHER" id="PTHR11922">
    <property type="entry name" value="GMP SYNTHASE-RELATED"/>
    <property type="match status" value="1"/>
</dbReference>
<dbReference type="Pfam" id="PF00117">
    <property type="entry name" value="GATase"/>
    <property type="match status" value="1"/>
</dbReference>
<dbReference type="Pfam" id="PF00958">
    <property type="entry name" value="GMP_synt_C"/>
    <property type="match status" value="1"/>
</dbReference>
<dbReference type="Pfam" id="PF02540">
    <property type="entry name" value="NAD_synthase"/>
    <property type="match status" value="1"/>
</dbReference>
<dbReference type="PRINTS" id="PR00097">
    <property type="entry name" value="ANTSNTHASEII"/>
</dbReference>
<dbReference type="PRINTS" id="PR00099">
    <property type="entry name" value="CPSGATASE"/>
</dbReference>
<dbReference type="PRINTS" id="PR00096">
    <property type="entry name" value="GATASE"/>
</dbReference>
<dbReference type="SUPFAM" id="SSF52402">
    <property type="entry name" value="Adenine nucleotide alpha hydrolases-like"/>
    <property type="match status" value="1"/>
</dbReference>
<dbReference type="SUPFAM" id="SSF52317">
    <property type="entry name" value="Class I glutamine amidotransferase-like"/>
    <property type="match status" value="1"/>
</dbReference>
<dbReference type="SUPFAM" id="SSF54810">
    <property type="entry name" value="GMP synthetase C-terminal dimerisation domain"/>
    <property type="match status" value="1"/>
</dbReference>
<dbReference type="PROSITE" id="PS51273">
    <property type="entry name" value="GATASE_TYPE_1"/>
    <property type="match status" value="1"/>
</dbReference>
<dbReference type="PROSITE" id="PS51553">
    <property type="entry name" value="GMPS_ATP_PPASE"/>
    <property type="match status" value="1"/>
</dbReference>
<gene>
    <name evidence="1" type="primary">guaA</name>
    <name type="ordered locus">BALH_0254</name>
</gene>
<accession>A0R8W7</accession>
<sequence length="515" mass="57579">MIILKKQHDTIIVLDFGSQYNQLIARRIREFGVYSELHPHTITAEEIKAMNPKGIIFSGGPNSVYGEGALHCDEKIFDLGLPIFGICYGMQLMTQQFGGTVERANHREYGKAVLKVENESKLYANLPEEQVVWMSHGDLVTGLPEGFVVDATSESCPIAGMSNEAKNLYGVQFHPEVRHSEHGNDLIKNFVFGVCGCSEGWNMENFIEVELEKIRETVGDKKVLCALSGGVDSSVVAVLIHKAIGDQLTCIFVDHGLLRKGEAEGVMKTFSEGFHMNVIKVDAKERFMNKLKGVEDPEQKRKIIGNEFIYVFDDEASKLEGMDFLAQGTLYTDIVESGTATAQTIKSHHNVGGLPEDMQFKLIEPLNTLFKDEVRVLGSELGIPDEIVWRQPFPGPGLGIRVLGEITEEKLEIVRESDAILREEIIKAGLDREIWQYFTALPGMRSVGVMGDERTYDYTVGIRAVTSIDGMTADWARIPWDVLEKISVRIVNEVKHVNRIVYDVTSKPPATIEWE</sequence>
<feature type="chain" id="PRO_1000120212" description="GMP synthase [glutamine-hydrolyzing]">
    <location>
        <begin position="1"/>
        <end position="515"/>
    </location>
</feature>
<feature type="domain" description="Glutamine amidotransferase type-1" evidence="1">
    <location>
        <begin position="10"/>
        <end position="200"/>
    </location>
</feature>
<feature type="domain" description="GMPS ATP-PPase" evidence="1">
    <location>
        <begin position="201"/>
        <end position="390"/>
    </location>
</feature>
<feature type="active site" description="Nucleophile" evidence="1">
    <location>
        <position position="87"/>
    </location>
</feature>
<feature type="active site" evidence="1">
    <location>
        <position position="174"/>
    </location>
</feature>
<feature type="active site" evidence="1">
    <location>
        <position position="176"/>
    </location>
</feature>
<feature type="binding site" evidence="1">
    <location>
        <begin position="228"/>
        <end position="234"/>
    </location>
    <ligand>
        <name>ATP</name>
        <dbReference type="ChEBI" id="CHEBI:30616"/>
    </ligand>
</feature>
<reference key="1">
    <citation type="journal article" date="2007" name="J. Bacteriol.">
        <title>The complete genome sequence of Bacillus thuringiensis Al Hakam.</title>
        <authorList>
            <person name="Challacombe J.F."/>
            <person name="Altherr M.R."/>
            <person name="Xie G."/>
            <person name="Bhotika S.S."/>
            <person name="Brown N."/>
            <person name="Bruce D."/>
            <person name="Campbell C.S."/>
            <person name="Campbell M.L."/>
            <person name="Chen J."/>
            <person name="Chertkov O."/>
            <person name="Cleland C."/>
            <person name="Dimitrijevic M."/>
            <person name="Doggett N.A."/>
            <person name="Fawcett J.J."/>
            <person name="Glavina T."/>
            <person name="Goodwin L.A."/>
            <person name="Green L.D."/>
            <person name="Han C.S."/>
            <person name="Hill K.K."/>
            <person name="Hitchcock P."/>
            <person name="Jackson P.J."/>
            <person name="Keim P."/>
            <person name="Kewalramani A.R."/>
            <person name="Longmire J."/>
            <person name="Lucas S."/>
            <person name="Malfatti S."/>
            <person name="Martinez D."/>
            <person name="McMurry K."/>
            <person name="Meincke L.J."/>
            <person name="Misra M."/>
            <person name="Moseman B.L."/>
            <person name="Mundt M."/>
            <person name="Munk A.C."/>
            <person name="Okinaka R.T."/>
            <person name="Parson-Quintana B."/>
            <person name="Reilly L.P."/>
            <person name="Richardson P."/>
            <person name="Robinson D.L."/>
            <person name="Saunders E."/>
            <person name="Tapia R."/>
            <person name="Tesmer J.G."/>
            <person name="Thayer N."/>
            <person name="Thompson L.S."/>
            <person name="Tice H."/>
            <person name="Ticknor L.O."/>
            <person name="Wills P.L."/>
            <person name="Gilna P."/>
            <person name="Brettin T.S."/>
        </authorList>
    </citation>
    <scope>NUCLEOTIDE SEQUENCE [LARGE SCALE GENOMIC DNA]</scope>
    <source>
        <strain>Al Hakam</strain>
    </source>
</reference>
<proteinExistence type="inferred from homology"/>
<keyword id="KW-0067">ATP-binding</keyword>
<keyword id="KW-0315">Glutamine amidotransferase</keyword>
<keyword id="KW-0332">GMP biosynthesis</keyword>
<keyword id="KW-0436">Ligase</keyword>
<keyword id="KW-0547">Nucleotide-binding</keyword>
<keyword id="KW-0658">Purine biosynthesis</keyword>